<keyword id="KW-0137">Centromere</keyword>
<keyword id="KW-0158">Chromosome</keyword>
<keyword id="KW-0479">Metal-binding</keyword>
<keyword id="KW-0539">Nucleus</keyword>
<keyword id="KW-0597">Phosphoprotein</keyword>
<keyword id="KW-1185">Reference proteome</keyword>
<keyword id="KW-0677">Repeat</keyword>
<keyword id="KW-0862">Zinc</keyword>
<keyword id="KW-0863">Zinc-finger</keyword>
<feature type="chain" id="PRO_0000297533" description="Zinc finger protein 330">
    <location>
        <begin position="1"/>
        <end position="320"/>
    </location>
</feature>
<feature type="zinc finger region" description="C4-type 1" evidence="3">
    <location>
        <begin position="42"/>
        <end position="58"/>
    </location>
</feature>
<feature type="zinc finger region" description="C4-type 2" evidence="3">
    <location>
        <begin position="67"/>
        <end position="104"/>
    </location>
</feature>
<feature type="zinc finger region" description="C4-type 3" evidence="3">
    <location>
        <begin position="129"/>
        <end position="149"/>
    </location>
</feature>
<feature type="zinc finger region" description="C4-type 4" evidence="3">
    <location>
        <begin position="175"/>
        <end position="189"/>
    </location>
</feature>
<feature type="region of interest" description="Disordered" evidence="4">
    <location>
        <begin position="1"/>
        <end position="23"/>
    </location>
</feature>
<feature type="region of interest" description="Disordered" evidence="4">
    <location>
        <begin position="206"/>
        <end position="250"/>
    </location>
</feature>
<feature type="region of interest" description="Disordered" evidence="4">
    <location>
        <begin position="264"/>
        <end position="303"/>
    </location>
</feature>
<feature type="short sequence motif" description="Nuclear localization signal" evidence="3">
    <location>
        <begin position="3"/>
        <end position="11"/>
    </location>
</feature>
<feature type="compositionally biased region" description="Basic and acidic residues" evidence="4">
    <location>
        <begin position="10"/>
        <end position="22"/>
    </location>
</feature>
<feature type="compositionally biased region" description="Basic and acidic residues" evidence="4">
    <location>
        <begin position="216"/>
        <end position="225"/>
    </location>
</feature>
<feature type="compositionally biased region" description="Acidic residues" evidence="4">
    <location>
        <begin position="269"/>
        <end position="287"/>
    </location>
</feature>
<feature type="modified residue" description="Phosphoserine" evidence="2">
    <location>
        <position position="291"/>
    </location>
</feature>
<organism>
    <name type="scientific">Bos taurus</name>
    <name type="common">Bovine</name>
    <dbReference type="NCBI Taxonomy" id="9913"/>
    <lineage>
        <taxon>Eukaryota</taxon>
        <taxon>Metazoa</taxon>
        <taxon>Chordata</taxon>
        <taxon>Craniata</taxon>
        <taxon>Vertebrata</taxon>
        <taxon>Euteleostomi</taxon>
        <taxon>Mammalia</taxon>
        <taxon>Eutheria</taxon>
        <taxon>Laurasiatheria</taxon>
        <taxon>Artiodactyla</taxon>
        <taxon>Ruminantia</taxon>
        <taxon>Pecora</taxon>
        <taxon>Bovidae</taxon>
        <taxon>Bovinae</taxon>
        <taxon>Bos</taxon>
    </lineage>
</organism>
<gene>
    <name type="primary">ZNF330</name>
    <name type="synonym">NOA36</name>
</gene>
<evidence type="ECO:0000250" key="1"/>
<evidence type="ECO:0000250" key="2">
    <source>
        <dbReference type="UniProtKB" id="Q9Y3S2"/>
    </source>
</evidence>
<evidence type="ECO:0000255" key="3"/>
<evidence type="ECO:0000256" key="4">
    <source>
        <dbReference type="SAM" id="MobiDB-lite"/>
    </source>
</evidence>
<evidence type="ECO:0000305" key="5"/>
<dbReference type="EMBL" id="BC109643">
    <property type="protein sequence ID" value="AAI09644.1"/>
    <property type="molecule type" value="mRNA"/>
</dbReference>
<dbReference type="RefSeq" id="NP_001033246.1">
    <property type="nucleotide sequence ID" value="NM_001038157.2"/>
</dbReference>
<dbReference type="RefSeq" id="XP_005217624.1">
    <property type="nucleotide sequence ID" value="XM_005217567.5"/>
</dbReference>
<dbReference type="RefSeq" id="XP_010812048.1">
    <property type="nucleotide sequence ID" value="XM_010813746.4"/>
</dbReference>
<dbReference type="FunCoup" id="Q32LC9">
    <property type="interactions" value="2735"/>
</dbReference>
<dbReference type="STRING" id="9913.ENSBTAP00000000370"/>
<dbReference type="PaxDb" id="9913-ENSBTAP00000000370"/>
<dbReference type="Ensembl" id="ENSBTAT00000000370.5">
    <property type="protein sequence ID" value="ENSBTAP00000000370.4"/>
    <property type="gene ID" value="ENSBTAG00000000297.6"/>
</dbReference>
<dbReference type="GeneID" id="533230"/>
<dbReference type="KEGG" id="bta:533230"/>
<dbReference type="CTD" id="27309"/>
<dbReference type="VEuPathDB" id="HostDB:ENSBTAG00000000297"/>
<dbReference type="eggNOG" id="ENOG502QRJT">
    <property type="taxonomic scope" value="Eukaryota"/>
</dbReference>
<dbReference type="GeneTree" id="ENSGT00390000017043"/>
<dbReference type="HOGENOM" id="CLU_074902_0_0_1"/>
<dbReference type="InParanoid" id="Q32LC9"/>
<dbReference type="OMA" id="CQRTRRQ"/>
<dbReference type="OrthoDB" id="10258894at2759"/>
<dbReference type="TreeFam" id="TF323303"/>
<dbReference type="Proteomes" id="UP000009136">
    <property type="component" value="Chromosome 17"/>
</dbReference>
<dbReference type="Bgee" id="ENSBTAG00000000297">
    <property type="expression patterns" value="Expressed in oocyte and 107 other cell types or tissues"/>
</dbReference>
<dbReference type="GO" id="GO:0000775">
    <property type="term" value="C:chromosome, centromeric region"/>
    <property type="evidence" value="ECO:0007669"/>
    <property type="project" value="UniProtKB-SubCell"/>
</dbReference>
<dbReference type="GO" id="GO:0005730">
    <property type="term" value="C:nucleolus"/>
    <property type="evidence" value="ECO:0007669"/>
    <property type="project" value="UniProtKB-SubCell"/>
</dbReference>
<dbReference type="GO" id="GO:0005634">
    <property type="term" value="C:nucleus"/>
    <property type="evidence" value="ECO:0000318"/>
    <property type="project" value="GO_Central"/>
</dbReference>
<dbReference type="GO" id="GO:0008270">
    <property type="term" value="F:zinc ion binding"/>
    <property type="evidence" value="ECO:0007669"/>
    <property type="project" value="UniProtKB-KW"/>
</dbReference>
<dbReference type="InterPro" id="IPR010531">
    <property type="entry name" value="NOA36"/>
</dbReference>
<dbReference type="PANTHER" id="PTHR13214">
    <property type="entry name" value="ZINC FINGER PROTEIN 330"/>
    <property type="match status" value="1"/>
</dbReference>
<dbReference type="PANTHER" id="PTHR13214:SF1">
    <property type="entry name" value="ZINC FINGER PROTEIN 330"/>
    <property type="match status" value="1"/>
</dbReference>
<dbReference type="Pfam" id="PF06524">
    <property type="entry name" value="NOA36"/>
    <property type="match status" value="1"/>
</dbReference>
<reference key="1">
    <citation type="submission" date="2005-11" db="EMBL/GenBank/DDBJ databases">
        <authorList>
            <consortium name="NIH - Mammalian Gene Collection (MGC) project"/>
        </authorList>
    </citation>
    <scope>NUCLEOTIDE SEQUENCE [LARGE SCALE MRNA]</scope>
    <source>
        <strain>Crossbred X Angus</strain>
        <tissue>Liver</tissue>
    </source>
</reference>
<accession>Q32LC9</accession>
<comment type="subcellular location">
    <subcellularLocation>
        <location evidence="1">Nucleus</location>
    </subcellularLocation>
    <subcellularLocation>
        <location evidence="1">Nucleus</location>
        <location evidence="1">Nucleolus</location>
    </subcellularLocation>
    <subcellularLocation>
        <location evidence="1">Chromosome</location>
        <location evidence="1">Centromere</location>
    </subcellularLocation>
    <text evidence="1">Predominantly expressed in nucleolus. In mitosis associated with centromeres and concentrated at the midbody in cytokinesis (By similarity).</text>
</comment>
<comment type="similarity">
    <text evidence="5">Belongs to the NOA36 family.</text>
</comment>
<proteinExistence type="evidence at transcript level"/>
<protein>
    <recommendedName>
        <fullName>Zinc finger protein 330</fullName>
    </recommendedName>
    <alternativeName>
        <fullName>Nucleolar autoantigen 36</fullName>
    </alternativeName>
</protein>
<sequence length="320" mass="35982">MPKKKTGARKKAENRREREKQLRASRSTIDLAKHPCNASMECDKCQRRQKNRAFCYFCNSVQKLPICAQCGKTKCMMKSSDCVIKHAGVYSTGLAMVGAICDFCEAWVCHGRKCLSTHACACPLTDAECVECERGVWDHGGRIFSCSFCHNFLCEDDQFEHQASCQVLEAETFKCVSCNRLGQHSCLRCKACFCDDHTRSKVFKQEKGKQPPCPKCGHETQETKDLSMSTRSLKFGRQTGGEEGDGASGYDAYWKNLASDKYAGASYHDEEEDEYEAEDDEEEEDEGGKDSDAESSDLFTNLNLGRTYASGYAHYEEQEN</sequence>
<name>ZN330_BOVIN</name>